<feature type="chain" id="PRO_0000410432" description="Sarcoplasmic/endoplasmic reticulum calcium ATPase">
    <location>
        <begin position="1" status="less than"/>
        <end position="143" status="greater than"/>
    </location>
</feature>
<feature type="non-consecutive residues" evidence="5">
    <location>
        <begin position="12"/>
        <end position="13"/>
    </location>
</feature>
<feature type="non-consecutive residues" evidence="5">
    <location>
        <begin position="30"/>
        <end position="31"/>
    </location>
</feature>
<feature type="non-consecutive residues" evidence="5">
    <location>
        <begin position="51"/>
        <end position="52"/>
    </location>
</feature>
<feature type="non-consecutive residues" evidence="5">
    <location>
        <begin position="66"/>
        <end position="67"/>
    </location>
</feature>
<feature type="non-consecutive residues" evidence="5">
    <location>
        <begin position="79"/>
        <end position="80"/>
    </location>
</feature>
<feature type="non-consecutive residues" evidence="5">
    <location>
        <begin position="95"/>
        <end position="96"/>
    </location>
</feature>
<feature type="non-consecutive residues" evidence="5">
    <location>
        <begin position="110"/>
        <end position="111"/>
    </location>
</feature>
<feature type="non-consecutive residues" evidence="5">
    <location>
        <begin position="118"/>
        <end position="119"/>
    </location>
</feature>
<feature type="non-consecutive residues" evidence="5">
    <location>
        <begin position="127"/>
        <end position="128"/>
    </location>
</feature>
<feature type="non-terminal residue" evidence="5">
    <location>
        <position position="1"/>
    </location>
</feature>
<feature type="non-terminal residue" evidence="5">
    <location>
        <position position="143"/>
    </location>
</feature>
<keyword id="KW-0020">Allergen</keyword>
<keyword id="KW-0106">Calcium</keyword>
<keyword id="KW-0109">Calcium transport</keyword>
<keyword id="KW-0903">Direct protein sequencing</keyword>
<keyword id="KW-0256">Endoplasmic reticulum</keyword>
<keyword id="KW-0406">Ion transport</keyword>
<keyword id="KW-0472">Membrane</keyword>
<keyword id="KW-0479">Metal-binding</keyword>
<keyword id="KW-0703">Sarcoplasmic reticulum</keyword>
<keyword id="KW-1278">Translocase</keyword>
<keyword id="KW-0812">Transmembrane</keyword>
<keyword id="KW-0813">Transport</keyword>
<accession>P86911</accession>
<organism>
    <name type="scientific">Chionoecetes opilio</name>
    <name type="common">Atlantic snow crab</name>
    <name type="synonym">Cancer opilio</name>
    <dbReference type="NCBI Taxonomy" id="41210"/>
    <lineage>
        <taxon>Eukaryota</taxon>
        <taxon>Metazoa</taxon>
        <taxon>Ecdysozoa</taxon>
        <taxon>Arthropoda</taxon>
        <taxon>Crustacea</taxon>
        <taxon>Multicrustacea</taxon>
        <taxon>Malacostraca</taxon>
        <taxon>Eumalacostraca</taxon>
        <taxon>Eucarida</taxon>
        <taxon>Decapoda</taxon>
        <taxon>Pleocyemata</taxon>
        <taxon>Brachyura</taxon>
        <taxon>Eubrachyura</taxon>
        <taxon>Majoidea</taxon>
        <taxon>Majidae</taxon>
        <taxon>Chionoecetes</taxon>
    </lineage>
</organism>
<dbReference type="EC" id="7.2.2.10" evidence="2"/>
<dbReference type="SMR" id="P86911"/>
<dbReference type="GO" id="GO:0033017">
    <property type="term" value="C:sarcoplasmic reticulum membrane"/>
    <property type="evidence" value="ECO:0007669"/>
    <property type="project" value="UniProtKB-SubCell"/>
</dbReference>
<dbReference type="GO" id="GO:0046872">
    <property type="term" value="F:metal ion binding"/>
    <property type="evidence" value="ECO:0007669"/>
    <property type="project" value="UniProtKB-KW"/>
</dbReference>
<dbReference type="GO" id="GO:0005388">
    <property type="term" value="F:P-type calcium transporter activity"/>
    <property type="evidence" value="ECO:0007669"/>
    <property type="project" value="UniProtKB-EC"/>
</dbReference>
<dbReference type="Gene3D" id="2.70.150.10">
    <property type="entry name" value="Calcium-transporting ATPase, cytoplasmic transduction domain A"/>
    <property type="match status" value="1"/>
</dbReference>
<dbReference type="InterPro" id="IPR008250">
    <property type="entry name" value="ATPase_P-typ_transduc_dom_A_sf"/>
</dbReference>
<dbReference type="PANTHER" id="PTHR42861">
    <property type="entry name" value="CALCIUM-TRANSPORTING ATPASE"/>
    <property type="match status" value="1"/>
</dbReference>
<dbReference type="Pfam" id="PF00122">
    <property type="entry name" value="E1-E2_ATPase"/>
    <property type="match status" value="1"/>
</dbReference>
<dbReference type="SUPFAM" id="SSF81653">
    <property type="entry name" value="Calcium ATPase, transduction domain A"/>
    <property type="match status" value="1"/>
</dbReference>
<sequence>YGPNELPAEEGKNAESAIEALKEYEPEMGKEIVPGDLVEISVGDKIPADLRIDQSILTGESVSVIKNILFSGTNVAAGKTQMAETEEIKTPLQQKVGEATETALIVLGEKEFTLEFSRVIVITGDNKKAEIGIAMGSGTAVAK</sequence>
<comment type="function">
    <text evidence="2">This magnesium-dependent enzyme catalyzes the hydrolysis of ATP coupled with the transport of calcium. Transports calcium ions from the cytosol into the sarcoplasmic/endoplasmic reticulum lumen. Contributes to calcium sequestration involved in muscular excitation/contraction (By similarity).</text>
</comment>
<comment type="catalytic activity">
    <reaction>
        <text>Ca(2+)(in) + ATP + H2O = Ca(2+)(out) + ADP + phosphate + H(+)</text>
        <dbReference type="Rhea" id="RHEA:18105"/>
        <dbReference type="ChEBI" id="CHEBI:15377"/>
        <dbReference type="ChEBI" id="CHEBI:15378"/>
        <dbReference type="ChEBI" id="CHEBI:29108"/>
        <dbReference type="ChEBI" id="CHEBI:30616"/>
        <dbReference type="ChEBI" id="CHEBI:43474"/>
        <dbReference type="ChEBI" id="CHEBI:456216"/>
        <dbReference type="EC" id="7.2.2.10"/>
    </reaction>
</comment>
<comment type="subcellular location">
    <subcellularLocation>
        <location evidence="1">Endoplasmic reticulum membrane</location>
        <topology evidence="1">Multi-pass membrane protein</topology>
    </subcellularLocation>
    <subcellularLocation>
        <location evidence="1">Sarcoplasmic reticulum membrane</location>
        <topology evidence="1">Multi-pass membrane protein</topology>
    </subcellularLocation>
</comment>
<comment type="allergen">
    <text evidence="4">Causes an allergic reaction in human. Binds to IgE.</text>
</comment>
<comment type="similarity">
    <text evidence="3">Belongs to the cation transport ATPase (P-type) (TC 3.A.3) family. Type IIA subfamily.</text>
</comment>
<reference evidence="6" key="1">
    <citation type="journal article" date="2011" name="J. Proteomics">
        <title>Biomolecular characterization of allergenic proteins in snow crab (Chionoecetes opilio) and de novo sequencing of the second allergen arginine kinase using tandem mass spectrometry.</title>
        <authorList>
            <person name="Abdel Rahman A.M."/>
            <person name="Kamath S.D."/>
            <person name="Lopata A.L."/>
            <person name="Robinson J.J."/>
            <person name="Helleur R.J."/>
        </authorList>
    </citation>
    <scope>PROTEIN SEQUENCE</scope>
    <scope>IGE-BINDING</scope>
    <source>
        <tissue evidence="4">Muscle</tissue>
    </source>
</reference>
<protein>
    <recommendedName>
        <fullName evidence="5">Sarcoplasmic/endoplasmic reticulum calcium ATPase</fullName>
        <shortName evidence="5">SERCA</shortName>
        <ecNumber evidence="2">7.2.2.10</ecNumber>
    </recommendedName>
</protein>
<name>AT2A_CHIOP</name>
<evidence type="ECO:0000250" key="1">
    <source>
        <dbReference type="UniProtKB" id="P04191"/>
    </source>
</evidence>
<evidence type="ECO:0000250" key="2">
    <source>
        <dbReference type="UniProtKB" id="Q93084"/>
    </source>
</evidence>
<evidence type="ECO:0000255" key="3"/>
<evidence type="ECO:0000269" key="4">
    <source>
    </source>
</evidence>
<evidence type="ECO:0000303" key="5">
    <source>
    </source>
</evidence>
<evidence type="ECO:0000305" key="6"/>
<proteinExistence type="evidence at protein level"/>